<gene>
    <name type="primary">SPO7</name>
    <name type="ordered locus">YAL009W</name>
</gene>
<comment type="function">
    <text evidence="4 5 6">Regulatory component of the NEM1-SPO7 complex which acts as a phosphatase and dephosphorylates the phosphatidic acid phosphohydrolase PAH1 (PubMed:15889145). Essential for the formation of a spherical nucleus and meiotic division (PubMed:9822591). The NEM1-SPOo7 protein phosphatase is required for efficient mitophagy under prolonged respiration, as well as for reticulophagy and pexophagy (PubMed:29305265).</text>
</comment>
<comment type="subunit">
    <text evidence="6">Component of the NEM1-SPO7 complex.</text>
</comment>
<comment type="interaction">
    <interactant intactId="EBI-17857">
        <id>P18410</id>
    </interactant>
    <interactant intactId="EBI-24435">
        <id>P38757</id>
        <label>NEM1</label>
    </interactant>
    <organismsDiffer>false</organismsDiffer>
    <experiments>4</experiments>
</comment>
<comment type="subcellular location">
    <subcellularLocation>
        <location evidence="6">Endoplasmic reticulum membrane</location>
        <topology evidence="6">Multi-pass membrane protein</topology>
    </subcellularLocation>
    <subcellularLocation>
        <location evidence="6">Nucleus membrane</location>
        <topology evidence="6">Multi-pass membrane protein</topology>
    </subcellularLocation>
</comment>
<comment type="disruption phenotype">
    <text evidence="5">Leads to inefficient mitochondrial sequestration and degradation, as well as to defective reticulophagy and pexophagy (PubMed:29305265).</text>
</comment>
<comment type="miscellaneous">
    <text evidence="3">Present with 861 molecules/cell in log phase SD medium.</text>
</comment>
<evidence type="ECO:0000255" key="1"/>
<evidence type="ECO:0000256" key="2">
    <source>
        <dbReference type="SAM" id="MobiDB-lite"/>
    </source>
</evidence>
<evidence type="ECO:0000269" key="3">
    <source>
    </source>
</evidence>
<evidence type="ECO:0000269" key="4">
    <source>
    </source>
</evidence>
<evidence type="ECO:0000269" key="5">
    <source>
    </source>
</evidence>
<evidence type="ECO:0000269" key="6">
    <source>
    </source>
</evidence>
<feature type="chain" id="PRO_0000072145" description="Sporulation-specific protein SPO7">
    <location>
        <begin position="1"/>
        <end position="259"/>
    </location>
</feature>
<feature type="topological domain" description="Cytoplasmic" evidence="1">
    <location>
        <begin position="1"/>
        <end position="72"/>
    </location>
</feature>
<feature type="transmembrane region" description="Helical" evidence="1">
    <location>
        <begin position="73"/>
        <end position="93"/>
    </location>
</feature>
<feature type="topological domain" description="Extracellular" evidence="1">
    <location>
        <begin position="94"/>
        <end position="106"/>
    </location>
</feature>
<feature type="transmembrane region" description="Helical" evidence="1">
    <location>
        <begin position="107"/>
        <end position="127"/>
    </location>
</feature>
<feature type="topological domain" description="Cytoplasmic" evidence="1">
    <location>
        <begin position="128"/>
        <end position="259"/>
    </location>
</feature>
<feature type="region of interest" description="Disordered" evidence="2">
    <location>
        <begin position="1"/>
        <end position="40"/>
    </location>
</feature>
<organism>
    <name type="scientific">Saccharomyces cerevisiae (strain ATCC 204508 / S288c)</name>
    <name type="common">Baker's yeast</name>
    <dbReference type="NCBI Taxonomy" id="559292"/>
    <lineage>
        <taxon>Eukaryota</taxon>
        <taxon>Fungi</taxon>
        <taxon>Dikarya</taxon>
        <taxon>Ascomycota</taxon>
        <taxon>Saccharomycotina</taxon>
        <taxon>Saccharomycetes</taxon>
        <taxon>Saccharomycetales</taxon>
        <taxon>Saccharomycetaceae</taxon>
        <taxon>Saccharomyces</taxon>
    </lineage>
</organism>
<keyword id="KW-0256">Endoplasmic reticulum</keyword>
<keyword id="KW-0443">Lipid metabolism</keyword>
<keyword id="KW-0472">Membrane</keyword>
<keyword id="KW-0539">Nucleus</keyword>
<keyword id="KW-1185">Reference proteome</keyword>
<keyword id="KW-0749">Sporulation</keyword>
<keyword id="KW-0812">Transmembrane</keyword>
<keyword id="KW-1133">Transmembrane helix</keyword>
<proteinExistence type="evidence at protein level"/>
<reference key="1">
    <citation type="journal article" date="1990" name="Gene">
        <title>Molecular cloning of chromosome I DNA from Saccharomyces cerevisiae: isolation, characterization and regulation of the SPO7 sporulation gene.</title>
        <authorList>
            <person name="Whyte W."/>
            <person name="Koepp L.H."/>
            <person name="Lamb J."/>
            <person name="Crowley J.C."/>
            <person name="Kaback D.B."/>
        </authorList>
    </citation>
    <scope>NUCLEOTIDE SEQUENCE [GENOMIC DNA]</scope>
</reference>
<reference key="2">
    <citation type="journal article" date="1994" name="Yeast">
        <title>Sequencing of chromosome I of Saccharomyces cerevisiae: analysis of the 42 kbp SPO7-CENI-CDC15 region.</title>
        <authorList>
            <person name="Clark M.W."/>
            <person name="Keng T."/>
            <person name="Storms R.K."/>
            <person name="Zhong W.-W."/>
            <person name="Fortin N."/>
            <person name="Zeng B."/>
            <person name="Delaney S."/>
            <person name="Ouellette B.F.F."/>
            <person name="Barton A.B."/>
            <person name="Kaback D.B."/>
            <person name="Bussey H."/>
        </authorList>
    </citation>
    <scope>NUCLEOTIDE SEQUENCE [GENOMIC DNA]</scope>
    <source>
        <strain>ATCC 204511 / S288c / AB972</strain>
    </source>
</reference>
<reference key="3">
    <citation type="journal article" date="1995" name="Proc. Natl. Acad. Sci. U.S.A.">
        <title>The nucleotide sequence of chromosome I from Saccharomyces cerevisiae.</title>
        <authorList>
            <person name="Bussey H."/>
            <person name="Kaback D.B."/>
            <person name="Zhong W.-W."/>
            <person name="Vo D.H."/>
            <person name="Clark M.W."/>
            <person name="Fortin N."/>
            <person name="Hall J."/>
            <person name="Ouellette B.F.F."/>
            <person name="Keng T."/>
            <person name="Barton A.B."/>
            <person name="Su Y."/>
            <person name="Davies C.J."/>
            <person name="Storms R.K."/>
        </authorList>
    </citation>
    <scope>NUCLEOTIDE SEQUENCE [LARGE SCALE GENOMIC DNA]</scope>
    <source>
        <strain>ATCC 204508 / S288c</strain>
    </source>
</reference>
<reference key="4">
    <citation type="journal article" date="2014" name="G3 (Bethesda)">
        <title>The reference genome sequence of Saccharomyces cerevisiae: Then and now.</title>
        <authorList>
            <person name="Engel S.R."/>
            <person name="Dietrich F.S."/>
            <person name="Fisk D.G."/>
            <person name="Binkley G."/>
            <person name="Balakrishnan R."/>
            <person name="Costanzo M.C."/>
            <person name="Dwight S.S."/>
            <person name="Hitz B.C."/>
            <person name="Karra K."/>
            <person name="Nash R.S."/>
            <person name="Weng S."/>
            <person name="Wong E.D."/>
            <person name="Lloyd P."/>
            <person name="Skrzypek M.S."/>
            <person name="Miyasato S.R."/>
            <person name="Simison M."/>
            <person name="Cherry J.M."/>
        </authorList>
    </citation>
    <scope>GENOME REANNOTATION</scope>
    <source>
        <strain>ATCC 204508 / S288c</strain>
    </source>
</reference>
<reference key="5">
    <citation type="journal article" date="2007" name="Genome Res.">
        <title>Approaching a complete repository of sequence-verified protein-encoding clones for Saccharomyces cerevisiae.</title>
        <authorList>
            <person name="Hu Y."/>
            <person name="Rolfs A."/>
            <person name="Bhullar B."/>
            <person name="Murthy T.V.S."/>
            <person name="Zhu C."/>
            <person name="Berger M.F."/>
            <person name="Camargo A.A."/>
            <person name="Kelley F."/>
            <person name="McCarron S."/>
            <person name="Jepson D."/>
            <person name="Richardson A."/>
            <person name="Raphael J."/>
            <person name="Moreira D."/>
            <person name="Taycher E."/>
            <person name="Zuo D."/>
            <person name="Mohr S."/>
            <person name="Kane M.F."/>
            <person name="Williamson J."/>
            <person name="Simpson A.J.G."/>
            <person name="Bulyk M.L."/>
            <person name="Harlow E."/>
            <person name="Marsischky G."/>
            <person name="Kolodner R.D."/>
            <person name="LaBaer J."/>
        </authorList>
    </citation>
    <scope>NUCLEOTIDE SEQUENCE [GENOMIC DNA]</scope>
    <source>
        <strain>ATCC 204508 / S288c</strain>
    </source>
</reference>
<reference key="6">
    <citation type="journal article" date="1998" name="EMBO J.">
        <title>A novel complex of membrane proteins required for formation of a spherical nucleus.</title>
        <authorList>
            <person name="Siniossoglou S."/>
            <person name="Santos-Rosa H."/>
            <person name="Rappsilber J."/>
            <person name="Mann M."/>
            <person name="Hurt E."/>
        </authorList>
    </citation>
    <scope>FUNCTION</scope>
    <scope>IDENTIFICATION IN THE NEM1-SPO7 COMPLEX</scope>
    <scope>SUBCELLULAR LOCATION</scope>
</reference>
<reference key="7">
    <citation type="journal article" date="2003" name="Nature">
        <title>Global analysis of protein expression in yeast.</title>
        <authorList>
            <person name="Ghaemmaghami S."/>
            <person name="Huh W.-K."/>
            <person name="Bower K."/>
            <person name="Howson R.W."/>
            <person name="Belle A."/>
            <person name="Dephoure N."/>
            <person name="O'Shea E.K."/>
            <person name="Weissman J.S."/>
        </authorList>
    </citation>
    <scope>LEVEL OF PROTEIN EXPRESSION [LARGE SCALE ANALYSIS]</scope>
</reference>
<reference key="8">
    <citation type="journal article" date="2005" name="EMBO J.">
        <title>The yeast lipin Smp2 couples phospholipid biosynthesis to nuclear membrane growth.</title>
        <authorList>
            <person name="Santos-Rosa H."/>
            <person name="Leung J."/>
            <person name="Grimsey N."/>
            <person name="Peak-Chew S."/>
            <person name="Siniossoglou S."/>
        </authorList>
    </citation>
    <scope>FUNCTION OF THE NEM1-SPO7 COMPLEX</scope>
</reference>
<reference key="9">
    <citation type="journal article" date="2006" name="Proc. Natl. Acad. Sci. U.S.A.">
        <title>A global topology map of the Saccharomyces cerevisiae membrane proteome.</title>
        <authorList>
            <person name="Kim H."/>
            <person name="Melen K."/>
            <person name="Oesterberg M."/>
            <person name="von Heijne G."/>
        </authorList>
    </citation>
    <scope>TOPOLOGY [LARGE SCALE ANALYSIS]</scope>
    <source>
        <strain>ATCC 208353 / W303-1A</strain>
    </source>
</reference>
<reference key="10">
    <citation type="journal article" date="2018" name="Biochem. Biophys. Res. Commun.">
        <title>The Nem1-Spo7 protein phosphatase complex is required for efficient mitophagy in yeast.</title>
        <authorList>
            <person name="Xu X."/>
            <person name="Okamoto K."/>
        </authorList>
    </citation>
    <scope>FUNCTION OF THE NEM1-SPO7 COMPLEX</scope>
    <scope>DISRUPTION PHENOTYPE</scope>
</reference>
<sequence>MEPESIGDVGNHAQDDSASIVSGPRRRSTSKTSSAKNIRNSSNISPASMIFRNLLILEDDLRRQAHEQKILKWQFTLFLASMAGVGAFTFYELYFTSDYVKGLHRVILQFTLSFISITVVLFHISGQYRRTIVIPRRFFTSTNKGIRQFNVKLVKVQSTWDEKYTDSVRFVSRTIAYCNIYCLKKFLWLKDDNAIVKFWKSVTIQSQPRIGAVDVKLVLNPRAFSAEIREGWEIYRDEFWAREGARRRKQAHELRPKSE</sequence>
<dbReference type="EMBL" id="M36073">
    <property type="protein sequence ID" value="AAA35073.1"/>
    <property type="molecule type" value="Genomic_DNA"/>
</dbReference>
<dbReference type="EMBL" id="L22015">
    <property type="protein sequence ID" value="AAC04949.1"/>
    <property type="molecule type" value="Genomic_DNA"/>
</dbReference>
<dbReference type="EMBL" id="AY558585">
    <property type="protein sequence ID" value="AAS56911.1"/>
    <property type="molecule type" value="Genomic_DNA"/>
</dbReference>
<dbReference type="EMBL" id="BK006935">
    <property type="protein sequence ID" value="DAA06979.1"/>
    <property type="molecule type" value="Genomic_DNA"/>
</dbReference>
<dbReference type="PIR" id="JN0099">
    <property type="entry name" value="JN0099"/>
</dbReference>
<dbReference type="RefSeq" id="NP_009393.1">
    <property type="nucleotide sequence ID" value="NM_001178154.1"/>
</dbReference>
<dbReference type="BioGRID" id="31757">
    <property type="interactions" value="213"/>
</dbReference>
<dbReference type="ComplexPortal" id="CPX-1787">
    <property type="entry name" value="Nem1-Spo7 phosphatase complex"/>
</dbReference>
<dbReference type="DIP" id="DIP-2441N"/>
<dbReference type="FunCoup" id="P18410">
    <property type="interactions" value="46"/>
</dbReference>
<dbReference type="IntAct" id="P18410">
    <property type="interactions" value="18"/>
</dbReference>
<dbReference type="MINT" id="P18410"/>
<dbReference type="STRING" id="4932.YAL009W"/>
<dbReference type="iPTMnet" id="P18410"/>
<dbReference type="PaxDb" id="4932-YAL009W"/>
<dbReference type="PeptideAtlas" id="P18410"/>
<dbReference type="EnsemblFungi" id="YAL009W_mRNA">
    <property type="protein sequence ID" value="YAL009W"/>
    <property type="gene ID" value="YAL009W"/>
</dbReference>
<dbReference type="GeneID" id="851224"/>
<dbReference type="KEGG" id="sce:YAL009W"/>
<dbReference type="AGR" id="SGD:S000000007"/>
<dbReference type="SGD" id="S000000007">
    <property type="gene designation" value="SPO7"/>
</dbReference>
<dbReference type="VEuPathDB" id="FungiDB:YAL009W"/>
<dbReference type="eggNOG" id="ENOG502QTI4">
    <property type="taxonomic scope" value="Eukaryota"/>
</dbReference>
<dbReference type="HOGENOM" id="CLU_065195_0_0_1"/>
<dbReference type="InParanoid" id="P18410"/>
<dbReference type="OMA" id="EYKRTIV"/>
<dbReference type="OrthoDB" id="5599171at2759"/>
<dbReference type="BioCyc" id="YEAST:G3O-28822-MONOMER"/>
<dbReference type="BioGRID-ORCS" id="851224">
    <property type="hits" value="5 hits in 10 CRISPR screens"/>
</dbReference>
<dbReference type="PRO" id="PR:P18410"/>
<dbReference type="Proteomes" id="UP000002311">
    <property type="component" value="Chromosome I"/>
</dbReference>
<dbReference type="RNAct" id="P18410">
    <property type="molecule type" value="protein"/>
</dbReference>
<dbReference type="GO" id="GO:0005783">
    <property type="term" value="C:endoplasmic reticulum"/>
    <property type="evidence" value="ECO:0007005"/>
    <property type="project" value="SGD"/>
</dbReference>
<dbReference type="GO" id="GO:0005789">
    <property type="term" value="C:endoplasmic reticulum membrane"/>
    <property type="evidence" value="ECO:0007669"/>
    <property type="project" value="UniProtKB-SubCell"/>
</dbReference>
<dbReference type="GO" id="GO:0016020">
    <property type="term" value="C:membrane"/>
    <property type="evidence" value="ECO:0000314"/>
    <property type="project" value="SGD"/>
</dbReference>
<dbReference type="GO" id="GO:0071595">
    <property type="term" value="C:Nem1-Spo7 phosphatase complex"/>
    <property type="evidence" value="ECO:0000314"/>
    <property type="project" value="ComplexPortal"/>
</dbReference>
<dbReference type="GO" id="GO:0031965">
    <property type="term" value="C:nuclear membrane"/>
    <property type="evidence" value="ECO:0007669"/>
    <property type="project" value="UniProtKB-SubCell"/>
</dbReference>
<dbReference type="GO" id="GO:0019888">
    <property type="term" value="F:protein phosphatase regulator activity"/>
    <property type="evidence" value="ECO:0007669"/>
    <property type="project" value="InterPro"/>
</dbReference>
<dbReference type="GO" id="GO:0006629">
    <property type="term" value="P:lipid metabolic process"/>
    <property type="evidence" value="ECO:0007669"/>
    <property type="project" value="UniProtKB-KW"/>
</dbReference>
<dbReference type="GO" id="GO:0071072">
    <property type="term" value="P:negative regulation of phospholipid biosynthetic process"/>
    <property type="evidence" value="ECO:0000316"/>
    <property type="project" value="SGD"/>
</dbReference>
<dbReference type="GO" id="GO:0006998">
    <property type="term" value="P:nuclear envelope organization"/>
    <property type="evidence" value="ECO:0000314"/>
    <property type="project" value="ComplexPortal"/>
</dbReference>
<dbReference type="GO" id="GO:0071071">
    <property type="term" value="P:regulation of phospholipid biosynthetic process"/>
    <property type="evidence" value="ECO:0000315"/>
    <property type="project" value="SGD"/>
</dbReference>
<dbReference type="GO" id="GO:0061709">
    <property type="term" value="P:reticulophagy"/>
    <property type="evidence" value="ECO:0000314"/>
    <property type="project" value="SGD"/>
</dbReference>
<dbReference type="GO" id="GO:0030435">
    <property type="term" value="P:sporulation resulting in formation of a cellular spore"/>
    <property type="evidence" value="ECO:0007669"/>
    <property type="project" value="UniProtKB-KW"/>
</dbReference>
<dbReference type="InterPro" id="IPR005605">
    <property type="entry name" value="Spo7"/>
</dbReference>
<dbReference type="PANTHER" id="PTHR28249">
    <property type="entry name" value="SPORULATION-SPECIFIC PROTEIN SPO7"/>
    <property type="match status" value="1"/>
</dbReference>
<dbReference type="PANTHER" id="PTHR28249:SF1">
    <property type="entry name" value="SPORULATION-SPECIFIC PROTEIN SPO7"/>
    <property type="match status" value="1"/>
</dbReference>
<dbReference type="Pfam" id="PF03907">
    <property type="entry name" value="Spo7"/>
    <property type="match status" value="1"/>
</dbReference>
<protein>
    <recommendedName>
        <fullName>Sporulation-specific protein SPO7</fullName>
    </recommendedName>
</protein>
<name>SPO7_YEAST</name>
<accession>P18410</accession>
<accession>D6VPK9</accession>